<accession>A5GQQ0</accession>
<sequence length="286" mass="29970">MDAAAELTLLEACWRTVVLGIVQGLTEFLPISSTAHLKVVPVLAGWGDPGVAVTAVIQLGSIAAVIGYFRSDLLQVCRGLARALREGDWGSPDARLGIAIAVGTLPVVVAGLLIKLFWPGYETSPLRSVASIGIVSIVMALLLALAERLGQRRKQLPSVQGLDGVVVGLAQALAIIPGVSRSGSTLTASLLFGWQRSDAARFSFLLGIPAITLAGLVELKGAFAEGSVYGPLPMLLGILSAAVVSWLAIAWLLKFLQTNSTWPFVIYRLVFGVVLLALVLANPTLG</sequence>
<feature type="chain" id="PRO_0000303037" description="Undecaprenyl-diphosphatase">
    <location>
        <begin position="1"/>
        <end position="286"/>
    </location>
</feature>
<feature type="transmembrane region" description="Helical" evidence="1">
    <location>
        <begin position="17"/>
        <end position="37"/>
    </location>
</feature>
<feature type="transmembrane region" description="Helical" evidence="1">
    <location>
        <begin position="49"/>
        <end position="69"/>
    </location>
</feature>
<feature type="transmembrane region" description="Helical" evidence="1">
    <location>
        <begin position="98"/>
        <end position="118"/>
    </location>
</feature>
<feature type="transmembrane region" description="Helical" evidence="1">
    <location>
        <begin position="126"/>
        <end position="146"/>
    </location>
</feature>
<feature type="transmembrane region" description="Helical" evidence="1">
    <location>
        <begin position="159"/>
        <end position="179"/>
    </location>
</feature>
<feature type="transmembrane region" description="Helical" evidence="1">
    <location>
        <begin position="204"/>
        <end position="224"/>
    </location>
</feature>
<feature type="transmembrane region" description="Helical" evidence="1">
    <location>
        <begin position="232"/>
        <end position="252"/>
    </location>
</feature>
<feature type="transmembrane region" description="Helical" evidence="1">
    <location>
        <begin position="261"/>
        <end position="281"/>
    </location>
</feature>
<evidence type="ECO:0000255" key="1">
    <source>
        <dbReference type="HAMAP-Rule" id="MF_01006"/>
    </source>
</evidence>
<organism>
    <name type="scientific">Synechococcus sp. (strain RCC307)</name>
    <dbReference type="NCBI Taxonomy" id="316278"/>
    <lineage>
        <taxon>Bacteria</taxon>
        <taxon>Bacillati</taxon>
        <taxon>Cyanobacteriota</taxon>
        <taxon>Cyanophyceae</taxon>
        <taxon>Synechococcales</taxon>
        <taxon>Synechococcaceae</taxon>
        <taxon>Synechococcus</taxon>
    </lineage>
</organism>
<proteinExistence type="inferred from homology"/>
<comment type="function">
    <text evidence="1">Catalyzes the dephosphorylation of undecaprenyl diphosphate (UPP). Confers resistance to bacitracin.</text>
</comment>
<comment type="catalytic activity">
    <reaction evidence="1">
        <text>di-trans,octa-cis-undecaprenyl diphosphate + H2O = di-trans,octa-cis-undecaprenyl phosphate + phosphate + H(+)</text>
        <dbReference type="Rhea" id="RHEA:28094"/>
        <dbReference type="ChEBI" id="CHEBI:15377"/>
        <dbReference type="ChEBI" id="CHEBI:15378"/>
        <dbReference type="ChEBI" id="CHEBI:43474"/>
        <dbReference type="ChEBI" id="CHEBI:58405"/>
        <dbReference type="ChEBI" id="CHEBI:60392"/>
        <dbReference type="EC" id="3.6.1.27"/>
    </reaction>
</comment>
<comment type="subcellular location">
    <subcellularLocation>
        <location evidence="1">Cell inner membrane</location>
        <topology evidence="1">Multi-pass membrane protein</topology>
    </subcellularLocation>
</comment>
<comment type="miscellaneous">
    <text>Bacitracin is thought to be involved in the inhibition of peptidoglycan synthesis by sequestering undecaprenyl diphosphate, thereby reducing the pool of lipid carrier available.</text>
</comment>
<comment type="similarity">
    <text evidence="1">Belongs to the UppP family.</text>
</comment>
<keyword id="KW-0046">Antibiotic resistance</keyword>
<keyword id="KW-0997">Cell inner membrane</keyword>
<keyword id="KW-1003">Cell membrane</keyword>
<keyword id="KW-0133">Cell shape</keyword>
<keyword id="KW-0961">Cell wall biogenesis/degradation</keyword>
<keyword id="KW-0378">Hydrolase</keyword>
<keyword id="KW-0472">Membrane</keyword>
<keyword id="KW-0573">Peptidoglycan synthesis</keyword>
<keyword id="KW-1185">Reference proteome</keyword>
<keyword id="KW-0812">Transmembrane</keyword>
<keyword id="KW-1133">Transmembrane helix</keyword>
<name>UPPP_SYNR3</name>
<reference key="1">
    <citation type="submission" date="2006-05" db="EMBL/GenBank/DDBJ databases">
        <authorList>
            <consortium name="Genoscope"/>
        </authorList>
    </citation>
    <scope>NUCLEOTIDE SEQUENCE [LARGE SCALE GENOMIC DNA]</scope>
    <source>
        <strain>RCC307</strain>
    </source>
</reference>
<dbReference type="EC" id="3.6.1.27" evidence="1"/>
<dbReference type="EMBL" id="CT978603">
    <property type="protein sequence ID" value="CAK27209.1"/>
    <property type="molecule type" value="Genomic_DNA"/>
</dbReference>
<dbReference type="SMR" id="A5GQQ0"/>
<dbReference type="STRING" id="316278.SynRCC307_0306"/>
<dbReference type="KEGG" id="syr:SynRCC307_0306"/>
<dbReference type="eggNOG" id="COG1968">
    <property type="taxonomic scope" value="Bacteria"/>
</dbReference>
<dbReference type="HOGENOM" id="CLU_060296_1_0_3"/>
<dbReference type="OrthoDB" id="9808289at2"/>
<dbReference type="Proteomes" id="UP000001115">
    <property type="component" value="Chromosome"/>
</dbReference>
<dbReference type="GO" id="GO:0005886">
    <property type="term" value="C:plasma membrane"/>
    <property type="evidence" value="ECO:0007669"/>
    <property type="project" value="UniProtKB-SubCell"/>
</dbReference>
<dbReference type="GO" id="GO:0050380">
    <property type="term" value="F:undecaprenyl-diphosphatase activity"/>
    <property type="evidence" value="ECO:0007669"/>
    <property type="project" value="UniProtKB-UniRule"/>
</dbReference>
<dbReference type="GO" id="GO:0071555">
    <property type="term" value="P:cell wall organization"/>
    <property type="evidence" value="ECO:0007669"/>
    <property type="project" value="UniProtKB-KW"/>
</dbReference>
<dbReference type="GO" id="GO:0009252">
    <property type="term" value="P:peptidoglycan biosynthetic process"/>
    <property type="evidence" value="ECO:0007669"/>
    <property type="project" value="UniProtKB-KW"/>
</dbReference>
<dbReference type="GO" id="GO:0008360">
    <property type="term" value="P:regulation of cell shape"/>
    <property type="evidence" value="ECO:0007669"/>
    <property type="project" value="UniProtKB-KW"/>
</dbReference>
<dbReference type="GO" id="GO:0046677">
    <property type="term" value="P:response to antibiotic"/>
    <property type="evidence" value="ECO:0007669"/>
    <property type="project" value="UniProtKB-UniRule"/>
</dbReference>
<dbReference type="HAMAP" id="MF_01006">
    <property type="entry name" value="Undec_diphosphatase"/>
    <property type="match status" value="1"/>
</dbReference>
<dbReference type="InterPro" id="IPR003824">
    <property type="entry name" value="UppP"/>
</dbReference>
<dbReference type="NCBIfam" id="NF001394">
    <property type="entry name" value="PRK00281.2-5"/>
    <property type="match status" value="1"/>
</dbReference>
<dbReference type="NCBIfam" id="TIGR00753">
    <property type="entry name" value="undec_PP_bacA"/>
    <property type="match status" value="1"/>
</dbReference>
<dbReference type="PANTHER" id="PTHR30622">
    <property type="entry name" value="UNDECAPRENYL-DIPHOSPHATASE"/>
    <property type="match status" value="1"/>
</dbReference>
<dbReference type="PANTHER" id="PTHR30622:SF4">
    <property type="entry name" value="UNDECAPRENYL-DIPHOSPHATASE"/>
    <property type="match status" value="1"/>
</dbReference>
<dbReference type="Pfam" id="PF02673">
    <property type="entry name" value="BacA"/>
    <property type="match status" value="1"/>
</dbReference>
<protein>
    <recommendedName>
        <fullName evidence="1">Undecaprenyl-diphosphatase</fullName>
        <ecNumber evidence="1">3.6.1.27</ecNumber>
    </recommendedName>
    <alternativeName>
        <fullName evidence="1">Bacitracin resistance protein</fullName>
    </alternativeName>
    <alternativeName>
        <fullName evidence="1">Undecaprenyl pyrophosphate phosphatase</fullName>
    </alternativeName>
</protein>
<gene>
    <name evidence="1" type="primary">uppP</name>
    <name type="ordered locus">SynRCC307_0306</name>
</gene>